<reference key="1">
    <citation type="journal article" date="2005" name="BMC Genomics">
        <title>Characterization of 954 bovine full-CDS cDNA sequences.</title>
        <authorList>
            <person name="Harhay G.P."/>
            <person name="Sonstegard T.S."/>
            <person name="Keele J.W."/>
            <person name="Heaton M.P."/>
            <person name="Clawson M.L."/>
            <person name="Snelling W.M."/>
            <person name="Wiedmann R.T."/>
            <person name="Van Tassell C.P."/>
            <person name="Smith T.P.L."/>
        </authorList>
    </citation>
    <scope>NUCLEOTIDE SEQUENCE [LARGE SCALE MRNA]</scope>
</reference>
<reference key="2">
    <citation type="submission" date="2006-09" db="EMBL/GenBank/DDBJ databases">
        <authorList>
            <consortium name="NIH - Mammalian Gene Collection (MGC) project"/>
        </authorList>
    </citation>
    <scope>NUCLEOTIDE SEQUENCE [LARGE SCALE MRNA]</scope>
    <source>
        <strain>Hereford</strain>
        <tissue>Fetal skin</tissue>
    </source>
</reference>
<comment type="function">
    <text evidence="1">Contributes to the epidermal integrity and skin barrier function. Plays a role in the lamellar granule (LG) secretory system and in the stratum corneum (SC) epithelial cell formation (By similarity).</text>
</comment>
<comment type="subcellular location">
    <subcellularLocation>
        <location evidence="1">Lysosome</location>
    </subcellularLocation>
    <subcellularLocation>
        <location evidence="1">Golgi apparatus</location>
        <location evidence="1">trans-Golgi network</location>
    </subcellularLocation>
    <subcellularLocation>
        <location evidence="4">Membrane</location>
        <topology evidence="4">Multi-pass membrane protein</topology>
    </subcellularLocation>
    <text evidence="1">Colocalized with TGOLN2 in the trans-Golgi network. Colocalized with LAMP1 in the lysosome (By similarity).</text>
</comment>
<gene>
    <name type="primary">TMEM79</name>
</gene>
<name>TMM79_BOVIN</name>
<dbReference type="EMBL" id="BT020827">
    <property type="protein sequence ID" value="AAX08844.1"/>
    <property type="molecule type" value="mRNA"/>
</dbReference>
<dbReference type="EMBL" id="BC123830">
    <property type="protein sequence ID" value="AAI23831.1"/>
    <property type="molecule type" value="mRNA"/>
</dbReference>
<dbReference type="RefSeq" id="NP_001014920.1">
    <property type="nucleotide sequence ID" value="NM_001014920.1"/>
</dbReference>
<dbReference type="FunCoup" id="Q5E9U3">
    <property type="interactions" value="103"/>
</dbReference>
<dbReference type="STRING" id="9913.ENSBTAP00000012416"/>
<dbReference type="PaxDb" id="9913-ENSBTAP00000012416"/>
<dbReference type="Ensembl" id="ENSBTAT00000012416.4">
    <property type="protein sequence ID" value="ENSBTAP00000012416.2"/>
    <property type="gene ID" value="ENSBTAG00000009436.4"/>
</dbReference>
<dbReference type="GeneID" id="513599"/>
<dbReference type="KEGG" id="bta:513599"/>
<dbReference type="CTD" id="84283"/>
<dbReference type="VEuPathDB" id="HostDB:ENSBTAG00000009436"/>
<dbReference type="VGNC" id="VGNC:36112">
    <property type="gene designation" value="TMEM79"/>
</dbReference>
<dbReference type="eggNOG" id="ENOG502QVUB">
    <property type="taxonomic scope" value="Eukaryota"/>
</dbReference>
<dbReference type="GeneTree" id="ENSGT00390000002390"/>
<dbReference type="HOGENOM" id="CLU_062246_1_0_1"/>
<dbReference type="InParanoid" id="Q5E9U3"/>
<dbReference type="OMA" id="DPQCIER"/>
<dbReference type="OrthoDB" id="8887147at2759"/>
<dbReference type="TreeFam" id="TF333310"/>
<dbReference type="Proteomes" id="UP000009136">
    <property type="component" value="Chromosome 3"/>
</dbReference>
<dbReference type="Bgee" id="ENSBTAG00000009436">
    <property type="expression patterns" value="Expressed in digestive system secreted substance and 101 other cell types or tissues"/>
</dbReference>
<dbReference type="GO" id="GO:0005765">
    <property type="term" value="C:lysosomal membrane"/>
    <property type="evidence" value="ECO:0000250"/>
    <property type="project" value="UniProtKB"/>
</dbReference>
<dbReference type="GO" id="GO:0032588">
    <property type="term" value="C:trans-Golgi network membrane"/>
    <property type="evidence" value="ECO:0000250"/>
    <property type="project" value="UniProtKB"/>
</dbReference>
<dbReference type="GO" id="GO:0042802">
    <property type="term" value="F:identical protein binding"/>
    <property type="evidence" value="ECO:0007669"/>
    <property type="project" value="Ensembl"/>
</dbReference>
<dbReference type="GO" id="GO:0070268">
    <property type="term" value="P:cornification"/>
    <property type="evidence" value="ECO:0007669"/>
    <property type="project" value="Ensembl"/>
</dbReference>
<dbReference type="GO" id="GO:0042335">
    <property type="term" value="P:cuticle development"/>
    <property type="evidence" value="ECO:0007669"/>
    <property type="project" value="Ensembl"/>
</dbReference>
<dbReference type="GO" id="GO:0002070">
    <property type="term" value="P:epithelial cell maturation"/>
    <property type="evidence" value="ECO:0000250"/>
    <property type="project" value="UniProtKB"/>
</dbReference>
<dbReference type="GO" id="GO:0061436">
    <property type="term" value="P:establishment of skin barrier"/>
    <property type="evidence" value="ECO:0000250"/>
    <property type="project" value="UniProtKB"/>
</dbReference>
<dbReference type="GO" id="GO:0031069">
    <property type="term" value="P:hair follicle morphogenesis"/>
    <property type="evidence" value="ECO:0007669"/>
    <property type="project" value="Ensembl"/>
</dbReference>
<dbReference type="GO" id="GO:0045684">
    <property type="term" value="P:positive regulation of epidermis development"/>
    <property type="evidence" value="ECO:0000250"/>
    <property type="project" value="UniProtKB"/>
</dbReference>
<dbReference type="GO" id="GO:0045055">
    <property type="term" value="P:regulated exocytosis"/>
    <property type="evidence" value="ECO:0000250"/>
    <property type="project" value="UniProtKB"/>
</dbReference>
<dbReference type="PANTHER" id="PTHR31004">
    <property type="entry name" value="TRANSMEMBRANE PROTEIN 79"/>
    <property type="match status" value="1"/>
</dbReference>
<dbReference type="PANTHER" id="PTHR31004:SF1">
    <property type="entry name" value="TRANSMEMBRANE PROTEIN 79"/>
    <property type="match status" value="1"/>
</dbReference>
<organism>
    <name type="scientific">Bos taurus</name>
    <name type="common">Bovine</name>
    <dbReference type="NCBI Taxonomy" id="9913"/>
    <lineage>
        <taxon>Eukaryota</taxon>
        <taxon>Metazoa</taxon>
        <taxon>Chordata</taxon>
        <taxon>Craniata</taxon>
        <taxon>Vertebrata</taxon>
        <taxon>Euteleostomi</taxon>
        <taxon>Mammalia</taxon>
        <taxon>Eutheria</taxon>
        <taxon>Laurasiatheria</taxon>
        <taxon>Artiodactyla</taxon>
        <taxon>Ruminantia</taxon>
        <taxon>Pecora</taxon>
        <taxon>Bovidae</taxon>
        <taxon>Bovinae</taxon>
        <taxon>Bos</taxon>
    </lineage>
</organism>
<feature type="chain" id="PRO_0000254117" description="Transmembrane protein 79">
    <location>
        <begin position="1"/>
        <end position="395"/>
    </location>
</feature>
<feature type="topological domain" description="Cytoplasmic" evidence="2">
    <location>
        <begin position="1"/>
        <end position="204"/>
    </location>
</feature>
<feature type="transmembrane region" description="Helical" evidence="2">
    <location>
        <begin position="205"/>
        <end position="225"/>
    </location>
</feature>
<feature type="topological domain" description="Extracellular" evidence="2">
    <location>
        <begin position="226"/>
        <end position="244"/>
    </location>
</feature>
<feature type="transmembrane region" description="Helical" evidence="2">
    <location>
        <begin position="245"/>
        <end position="265"/>
    </location>
</feature>
<feature type="topological domain" description="Cytoplasmic" evidence="2">
    <location>
        <begin position="266"/>
        <end position="290"/>
    </location>
</feature>
<feature type="transmembrane region" description="Helical" evidence="2">
    <location>
        <begin position="291"/>
        <end position="311"/>
    </location>
</feature>
<feature type="topological domain" description="Extracellular" evidence="2">
    <location>
        <begin position="312"/>
        <end position="313"/>
    </location>
</feature>
<feature type="transmembrane region" description="Helical" evidence="2">
    <location>
        <begin position="314"/>
        <end position="334"/>
    </location>
</feature>
<feature type="topological domain" description="Cytoplasmic" evidence="2">
    <location>
        <begin position="335"/>
        <end position="343"/>
    </location>
</feature>
<feature type="transmembrane region" description="Helical" evidence="2">
    <location>
        <begin position="344"/>
        <end position="364"/>
    </location>
</feature>
<feature type="topological domain" description="Extracellular" evidence="2">
    <location>
        <begin position="365"/>
        <end position="395"/>
    </location>
</feature>
<feature type="region of interest" description="Disordered" evidence="3">
    <location>
        <begin position="1"/>
        <end position="115"/>
    </location>
</feature>
<proteinExistence type="evidence at transcript level"/>
<evidence type="ECO:0000250" key="1"/>
<evidence type="ECO:0000255" key="2"/>
<evidence type="ECO:0000256" key="3">
    <source>
        <dbReference type="SAM" id="MobiDB-lite"/>
    </source>
</evidence>
<evidence type="ECO:0000305" key="4"/>
<protein>
    <recommendedName>
        <fullName>Transmembrane protein 79</fullName>
    </recommendedName>
    <alternativeName>
        <fullName>Mattrin</fullName>
    </alternativeName>
</protein>
<accession>Q5E9U3</accession>
<accession>A4FV77</accession>
<keyword id="KW-0333">Golgi apparatus</keyword>
<keyword id="KW-0458">Lysosome</keyword>
<keyword id="KW-0472">Membrane</keyword>
<keyword id="KW-1185">Reference proteome</keyword>
<keyword id="KW-0812">Transmembrane</keyword>
<keyword id="KW-1133">Transmembrane helix</keyword>
<sequence length="395" mass="43502">MTEPETLALLEVKGPETLEKSPPQALVPNGRKLEGEDEVESLGAESSRVGSSAESPTAREGTEDGLDSTVSEAATLPWGTGPQPSAPFPDPPGWRNIEPEPPESEPPTKLEELPEDEASLLPEKAARAFVPIDLQCIERRPQEDLVVCCEASEGEHRRTFLPPRATHPEPPECKWAEAVVKPPGHSCGGCGGCGGREALRAVASVGAALILFPCLLYGAYAFLPFDAPRLPTMSSRLIYTLRCGVFATFPIVLGILVYGLSLLCFAALRPFGEPRREVEIHRQYVAQSVQLFILYFFNLAVLSTYLPQDALKLLPLLTGLFAISRLIYWLTFAVGRSFRGFGYGLTFLPLLSMLLWNFYYMFVVEPERMLTASESRLDYPDHARSASDYRPRSRG</sequence>